<feature type="chain" id="PRO_1000011745" description="GTPase Der">
    <location>
        <begin position="1"/>
        <end position="488"/>
    </location>
</feature>
<feature type="domain" description="EngA-type G 1">
    <location>
        <begin position="3"/>
        <end position="166"/>
    </location>
</feature>
<feature type="domain" description="EngA-type G 2">
    <location>
        <begin position="201"/>
        <end position="374"/>
    </location>
</feature>
<feature type="domain" description="KH-like" evidence="1">
    <location>
        <begin position="375"/>
        <end position="459"/>
    </location>
</feature>
<feature type="binding site" evidence="1">
    <location>
        <begin position="9"/>
        <end position="16"/>
    </location>
    <ligand>
        <name>GTP</name>
        <dbReference type="ChEBI" id="CHEBI:37565"/>
        <label>1</label>
    </ligand>
</feature>
<feature type="binding site" evidence="1">
    <location>
        <begin position="56"/>
        <end position="60"/>
    </location>
    <ligand>
        <name>GTP</name>
        <dbReference type="ChEBI" id="CHEBI:37565"/>
        <label>1</label>
    </ligand>
</feature>
<feature type="binding site" evidence="1">
    <location>
        <begin position="118"/>
        <end position="121"/>
    </location>
    <ligand>
        <name>GTP</name>
        <dbReference type="ChEBI" id="CHEBI:37565"/>
        <label>1</label>
    </ligand>
</feature>
<feature type="binding site" evidence="1">
    <location>
        <begin position="207"/>
        <end position="214"/>
    </location>
    <ligand>
        <name>GTP</name>
        <dbReference type="ChEBI" id="CHEBI:37565"/>
        <label>2</label>
    </ligand>
</feature>
<feature type="binding site" evidence="1">
    <location>
        <begin position="254"/>
        <end position="258"/>
    </location>
    <ligand>
        <name>GTP</name>
        <dbReference type="ChEBI" id="CHEBI:37565"/>
        <label>2</label>
    </ligand>
</feature>
<feature type="binding site" evidence="1">
    <location>
        <begin position="319"/>
        <end position="322"/>
    </location>
    <ligand>
        <name>GTP</name>
        <dbReference type="ChEBI" id="CHEBI:37565"/>
        <label>2</label>
    </ligand>
</feature>
<proteinExistence type="inferred from homology"/>
<dbReference type="EMBL" id="AP008232">
    <property type="protein sequence ID" value="BAE75031.1"/>
    <property type="molecule type" value="Genomic_DNA"/>
</dbReference>
<dbReference type="RefSeq" id="WP_011411580.1">
    <property type="nucleotide sequence ID" value="NC_007712.1"/>
</dbReference>
<dbReference type="SMR" id="Q2NS44"/>
<dbReference type="STRING" id="343509.SG1756"/>
<dbReference type="KEGG" id="sgl:SG1756"/>
<dbReference type="eggNOG" id="COG1160">
    <property type="taxonomic scope" value="Bacteria"/>
</dbReference>
<dbReference type="HOGENOM" id="CLU_016077_6_2_6"/>
<dbReference type="OrthoDB" id="9805918at2"/>
<dbReference type="BioCyc" id="SGLO343509:SGP1_RS16025-MONOMER"/>
<dbReference type="Proteomes" id="UP000001932">
    <property type="component" value="Chromosome"/>
</dbReference>
<dbReference type="GO" id="GO:0005525">
    <property type="term" value="F:GTP binding"/>
    <property type="evidence" value="ECO:0007669"/>
    <property type="project" value="UniProtKB-UniRule"/>
</dbReference>
<dbReference type="GO" id="GO:0043022">
    <property type="term" value="F:ribosome binding"/>
    <property type="evidence" value="ECO:0007669"/>
    <property type="project" value="TreeGrafter"/>
</dbReference>
<dbReference type="GO" id="GO:0042254">
    <property type="term" value="P:ribosome biogenesis"/>
    <property type="evidence" value="ECO:0007669"/>
    <property type="project" value="UniProtKB-KW"/>
</dbReference>
<dbReference type="CDD" id="cd01894">
    <property type="entry name" value="EngA1"/>
    <property type="match status" value="1"/>
</dbReference>
<dbReference type="CDD" id="cd01895">
    <property type="entry name" value="EngA2"/>
    <property type="match status" value="1"/>
</dbReference>
<dbReference type="FunFam" id="3.30.300.20:FF:000004">
    <property type="entry name" value="GTPase Der"/>
    <property type="match status" value="1"/>
</dbReference>
<dbReference type="FunFam" id="3.40.50.300:FF:000040">
    <property type="entry name" value="GTPase Der"/>
    <property type="match status" value="1"/>
</dbReference>
<dbReference type="FunFam" id="3.40.50.300:FF:000057">
    <property type="entry name" value="GTPase Der"/>
    <property type="match status" value="1"/>
</dbReference>
<dbReference type="Gene3D" id="3.30.300.20">
    <property type="match status" value="1"/>
</dbReference>
<dbReference type="Gene3D" id="3.40.50.300">
    <property type="entry name" value="P-loop containing nucleotide triphosphate hydrolases"/>
    <property type="match status" value="2"/>
</dbReference>
<dbReference type="HAMAP" id="MF_00195">
    <property type="entry name" value="GTPase_Der"/>
    <property type="match status" value="1"/>
</dbReference>
<dbReference type="InterPro" id="IPR031166">
    <property type="entry name" value="G_ENGA"/>
</dbReference>
<dbReference type="InterPro" id="IPR006073">
    <property type="entry name" value="GTP-bd"/>
</dbReference>
<dbReference type="InterPro" id="IPR016484">
    <property type="entry name" value="GTPase_Der"/>
</dbReference>
<dbReference type="InterPro" id="IPR032859">
    <property type="entry name" value="KH_dom-like"/>
</dbReference>
<dbReference type="InterPro" id="IPR015946">
    <property type="entry name" value="KH_dom-like_a/b"/>
</dbReference>
<dbReference type="InterPro" id="IPR027417">
    <property type="entry name" value="P-loop_NTPase"/>
</dbReference>
<dbReference type="InterPro" id="IPR005225">
    <property type="entry name" value="Small_GTP-bd"/>
</dbReference>
<dbReference type="NCBIfam" id="TIGR03594">
    <property type="entry name" value="GTPase_EngA"/>
    <property type="match status" value="1"/>
</dbReference>
<dbReference type="NCBIfam" id="TIGR00231">
    <property type="entry name" value="small_GTP"/>
    <property type="match status" value="2"/>
</dbReference>
<dbReference type="PANTHER" id="PTHR43834">
    <property type="entry name" value="GTPASE DER"/>
    <property type="match status" value="1"/>
</dbReference>
<dbReference type="PANTHER" id="PTHR43834:SF6">
    <property type="entry name" value="GTPASE DER"/>
    <property type="match status" value="1"/>
</dbReference>
<dbReference type="Pfam" id="PF14714">
    <property type="entry name" value="KH_dom-like"/>
    <property type="match status" value="1"/>
</dbReference>
<dbReference type="Pfam" id="PF01926">
    <property type="entry name" value="MMR_HSR1"/>
    <property type="match status" value="2"/>
</dbReference>
<dbReference type="PIRSF" id="PIRSF006485">
    <property type="entry name" value="GTP-binding_EngA"/>
    <property type="match status" value="1"/>
</dbReference>
<dbReference type="PRINTS" id="PR00326">
    <property type="entry name" value="GTP1OBG"/>
</dbReference>
<dbReference type="SUPFAM" id="SSF52540">
    <property type="entry name" value="P-loop containing nucleoside triphosphate hydrolases"/>
    <property type="match status" value="2"/>
</dbReference>
<dbReference type="PROSITE" id="PS51712">
    <property type="entry name" value="G_ENGA"/>
    <property type="match status" value="2"/>
</dbReference>
<comment type="function">
    <text evidence="1">GTPase that plays an essential role in the late steps of ribosome biogenesis.</text>
</comment>
<comment type="subunit">
    <text evidence="1">Associates with the 50S ribosomal subunit.</text>
</comment>
<comment type="similarity">
    <text evidence="1">Belongs to the TRAFAC class TrmE-Era-EngA-EngB-Septin-like GTPase superfamily. EngA (Der) GTPase family.</text>
</comment>
<keyword id="KW-0342">GTP-binding</keyword>
<keyword id="KW-0547">Nucleotide-binding</keyword>
<keyword id="KW-0677">Repeat</keyword>
<keyword id="KW-0690">Ribosome biogenesis</keyword>
<accession>Q2NS44</accession>
<gene>
    <name evidence="1" type="primary">der</name>
    <name type="synonym">engA</name>
    <name type="ordered locus">SG1756</name>
</gene>
<evidence type="ECO:0000255" key="1">
    <source>
        <dbReference type="HAMAP-Rule" id="MF_00195"/>
    </source>
</evidence>
<name>DER_SODGM</name>
<organism>
    <name type="scientific">Sodalis glossinidius (strain morsitans)</name>
    <dbReference type="NCBI Taxonomy" id="343509"/>
    <lineage>
        <taxon>Bacteria</taxon>
        <taxon>Pseudomonadati</taxon>
        <taxon>Pseudomonadota</taxon>
        <taxon>Gammaproteobacteria</taxon>
        <taxon>Enterobacterales</taxon>
        <taxon>Bruguierivoracaceae</taxon>
        <taxon>Sodalis</taxon>
    </lineage>
</organism>
<sequence>MIPVVALVGRPNVGKSTLFNRLTRTRDALVADFPGLTRDRKYCRAEWEGHEFIVIDTGGIDGTEEGVETRMAGQSLVAIEEADIVLFMVDGRAGLMAADKGIARHLRSREKTTVIVANKTDGIDADSAVGDFYSLGMGEIVPIAASHGRGINSLLEQVLLPLVSDGLAEAEDEFAPWPDDEAEVLAREEEEEPFDPQSLPIKLAIVGRPNVGKSTLTNRILGEERVVVYDMPGTTRDSIYIPMVRDEREYVLIDTAGVRKRGKVTETVEKFSVIKTLQAIEDANVVLLVIDAREGISDQDLSLLGFILNSGRSLVIAVNKWDGLSSETRDEVKEALDHRLGFIDFARVHFISALHGSGVGNLFESVNEAYQCATKRVSTALLTRIMRMAVDEHQPPLVRGRRVKPKYAHAGGYNPPIVVIHGTQVKDLPDTYKRYLMNYFRRSLGIMGTPIRIQFNEGANPFAGRRNTLTPTQLRKRKRLMSHIKKNK</sequence>
<reference key="1">
    <citation type="journal article" date="2006" name="Genome Res.">
        <title>Massive genome erosion and functional adaptations provide insights into the symbiotic lifestyle of Sodalis glossinidius in the tsetse host.</title>
        <authorList>
            <person name="Toh H."/>
            <person name="Weiss B.L."/>
            <person name="Perkin S.A.H."/>
            <person name="Yamashita A."/>
            <person name="Oshima K."/>
            <person name="Hattori M."/>
            <person name="Aksoy S."/>
        </authorList>
    </citation>
    <scope>NUCLEOTIDE SEQUENCE [LARGE SCALE GENOMIC DNA]</scope>
    <source>
        <strain>morsitans</strain>
    </source>
</reference>
<protein>
    <recommendedName>
        <fullName evidence="1">GTPase Der</fullName>
    </recommendedName>
    <alternativeName>
        <fullName evidence="1">GTP-binding protein EngA</fullName>
    </alternativeName>
</protein>